<evidence type="ECO:0000255" key="1">
    <source>
        <dbReference type="PROSITE-ProRule" id="PRU01007"/>
    </source>
</evidence>
<evidence type="ECO:0007829" key="2">
    <source>
        <dbReference type="PDB" id="1Y7P"/>
    </source>
</evidence>
<dbReference type="EMBL" id="AE000782">
    <property type="protein sequence ID" value="AAB89840.1"/>
    <property type="molecule type" value="Genomic_DNA"/>
</dbReference>
<dbReference type="PIR" id="B69425">
    <property type="entry name" value="B69425"/>
</dbReference>
<dbReference type="RefSeq" id="WP_010878900.1">
    <property type="nucleotide sequence ID" value="NC_000917.1"/>
</dbReference>
<dbReference type="PDB" id="1Y7P">
    <property type="method" value="X-ray"/>
    <property type="resolution" value="1.90 A"/>
    <property type="chains" value="A/B/C=1-219"/>
</dbReference>
<dbReference type="PDBsum" id="1Y7P"/>
<dbReference type="SMR" id="O28869"/>
<dbReference type="STRING" id="224325.AF_1403"/>
<dbReference type="PaxDb" id="224325-AF_1403"/>
<dbReference type="DNASU" id="1484626"/>
<dbReference type="EnsemblBacteria" id="AAB89840">
    <property type="protein sequence ID" value="AAB89840"/>
    <property type="gene ID" value="AF_1403"/>
</dbReference>
<dbReference type="GeneID" id="1484626"/>
<dbReference type="KEGG" id="afu:AF_1403"/>
<dbReference type="eggNOG" id="arCOG00813">
    <property type="taxonomic scope" value="Archaea"/>
</dbReference>
<dbReference type="HOGENOM" id="CLU_1264587_0_0_2"/>
<dbReference type="OrthoDB" id="146838at2157"/>
<dbReference type="PhylomeDB" id="O28869"/>
<dbReference type="EvolutionaryTrace" id="O28869"/>
<dbReference type="Proteomes" id="UP000002199">
    <property type="component" value="Chromosome"/>
</dbReference>
<dbReference type="Gene3D" id="3.30.70.260">
    <property type="match status" value="1"/>
</dbReference>
<dbReference type="Gene3D" id="3.40.50.10550">
    <property type="entry name" value="Hypothetical protein af1403, domain 2"/>
    <property type="match status" value="1"/>
</dbReference>
<dbReference type="InterPro" id="IPR045865">
    <property type="entry name" value="ACT-like_dom_sf"/>
</dbReference>
<dbReference type="InterPro" id="IPR002912">
    <property type="entry name" value="ACT_dom"/>
</dbReference>
<dbReference type="InterPro" id="IPR054480">
    <property type="entry name" value="AHAS_small-like_ACT"/>
</dbReference>
<dbReference type="InterPro" id="IPR011006">
    <property type="entry name" value="CheY-like_superfamily"/>
</dbReference>
<dbReference type="InterPro" id="IPR040537">
    <property type="entry name" value="DUF5612"/>
</dbReference>
<dbReference type="InterPro" id="IPR015832">
    <property type="entry name" value="UCP006363_ACT"/>
</dbReference>
<dbReference type="Pfam" id="PF22629">
    <property type="entry name" value="ACT_AHAS_ss"/>
    <property type="match status" value="1"/>
</dbReference>
<dbReference type="Pfam" id="PF18462">
    <property type="entry name" value="DUF5612"/>
    <property type="match status" value="1"/>
</dbReference>
<dbReference type="PIRSF" id="PIRSF006363">
    <property type="entry name" value="UCP006363_ACT"/>
    <property type="match status" value="1"/>
</dbReference>
<dbReference type="SUPFAM" id="SSF55021">
    <property type="entry name" value="ACT-like"/>
    <property type="match status" value="1"/>
</dbReference>
<dbReference type="SUPFAM" id="SSF52172">
    <property type="entry name" value="CheY-like"/>
    <property type="match status" value="1"/>
</dbReference>
<dbReference type="PROSITE" id="PS51671">
    <property type="entry name" value="ACT"/>
    <property type="match status" value="1"/>
</dbReference>
<gene>
    <name type="ordered locus">AF_1403</name>
</gene>
<accession>O28869</accession>
<reference key="1">
    <citation type="journal article" date="1997" name="Nature">
        <title>The complete genome sequence of the hyperthermophilic, sulphate-reducing archaeon Archaeoglobus fulgidus.</title>
        <authorList>
            <person name="Klenk H.-P."/>
            <person name="Clayton R.A."/>
            <person name="Tomb J.-F."/>
            <person name="White O."/>
            <person name="Nelson K.E."/>
            <person name="Ketchum K.A."/>
            <person name="Dodson R.J."/>
            <person name="Gwinn M.L."/>
            <person name="Hickey E.K."/>
            <person name="Peterson J.D."/>
            <person name="Richardson D.L."/>
            <person name="Kerlavage A.R."/>
            <person name="Graham D.E."/>
            <person name="Kyrpides N.C."/>
            <person name="Fleischmann R.D."/>
            <person name="Quackenbush J."/>
            <person name="Lee N.H."/>
            <person name="Sutton G.G."/>
            <person name="Gill S.R."/>
            <person name="Kirkness E.F."/>
            <person name="Dougherty B.A."/>
            <person name="McKenney K."/>
            <person name="Adams M.D."/>
            <person name="Loftus B.J."/>
            <person name="Peterson S.N."/>
            <person name="Reich C.I."/>
            <person name="McNeil L.K."/>
            <person name="Badger J.H."/>
            <person name="Glodek A."/>
            <person name="Zhou L."/>
            <person name="Overbeek R."/>
            <person name="Gocayne J.D."/>
            <person name="Weidman J.F."/>
            <person name="McDonald L.A."/>
            <person name="Utterback T.R."/>
            <person name="Cotton M.D."/>
            <person name="Spriggs T."/>
            <person name="Artiach P."/>
            <person name="Kaine B.P."/>
            <person name="Sykes S.M."/>
            <person name="Sadow P.W."/>
            <person name="D'Andrea K.P."/>
            <person name="Bowman C."/>
            <person name="Fujii C."/>
            <person name="Garland S.A."/>
            <person name="Mason T.M."/>
            <person name="Olsen G.J."/>
            <person name="Fraser C.M."/>
            <person name="Smith H.O."/>
            <person name="Woese C.R."/>
            <person name="Venter J.C."/>
        </authorList>
    </citation>
    <scope>NUCLEOTIDE SEQUENCE [LARGE SCALE GENOMIC DNA]</scope>
    <source>
        <strain>ATCC 49558 / DSM 4304 / JCM 9628 / NBRC 100126 / VC-16</strain>
    </source>
</reference>
<keyword id="KW-0002">3D-structure</keyword>
<keyword id="KW-1185">Reference proteome</keyword>
<organism>
    <name type="scientific">Archaeoglobus fulgidus (strain ATCC 49558 / DSM 4304 / JCM 9628 / NBRC 100126 / VC-16)</name>
    <dbReference type="NCBI Taxonomy" id="224325"/>
    <lineage>
        <taxon>Archaea</taxon>
        <taxon>Methanobacteriati</taxon>
        <taxon>Methanobacteriota</taxon>
        <taxon>Archaeoglobi</taxon>
        <taxon>Archaeoglobales</taxon>
        <taxon>Archaeoglobaceae</taxon>
        <taxon>Archaeoglobus</taxon>
    </lineage>
</organism>
<sequence>MLRGLRIIAENKIGVLRDLTTIIAEEGGNITFAQTFLIKHGEHEGKALIYFEIEGGDFEKILERVKTFDYIIEIEEEESFERVFGKRVIILGGGALVSQVAIGAISEADRHNLRGERISVDTMPVVGEEEIAEAVKAVSRLHRAEVLVLAGGIMGGKITEEVKKLRKSGIRVISLSMFGSVPDVADVVISDPVMAGTLAVMHISEKAKFDLDRVKGRRI</sequence>
<feature type="chain" id="PRO_0000107347" description="Uncharacterized protein AF_1403">
    <location>
        <begin position="1"/>
        <end position="219"/>
    </location>
</feature>
<feature type="domain" description="ACT" evidence="1">
    <location>
        <begin position="4"/>
        <end position="79"/>
    </location>
</feature>
<feature type="strand" evidence="2">
    <location>
        <begin position="3"/>
        <end position="10"/>
    </location>
</feature>
<feature type="helix" evidence="2">
    <location>
        <begin position="15"/>
        <end position="22"/>
    </location>
</feature>
<feature type="strand" evidence="2">
    <location>
        <begin position="30"/>
        <end position="37"/>
    </location>
</feature>
<feature type="turn" evidence="2">
    <location>
        <begin position="42"/>
        <end position="45"/>
    </location>
</feature>
<feature type="strand" evidence="2">
    <location>
        <begin position="46"/>
        <end position="53"/>
    </location>
</feature>
<feature type="helix" evidence="2">
    <location>
        <begin position="58"/>
        <end position="66"/>
    </location>
</feature>
<feature type="strand" evidence="2">
    <location>
        <begin position="71"/>
        <end position="77"/>
    </location>
</feature>
<feature type="helix" evidence="2">
    <location>
        <begin position="80"/>
        <end position="83"/>
    </location>
</feature>
<feature type="strand" evidence="2">
    <location>
        <begin position="86"/>
        <end position="92"/>
    </location>
</feature>
<feature type="helix" evidence="2">
    <location>
        <begin position="94"/>
        <end position="113"/>
    </location>
</feature>
<feature type="strand" evidence="2">
    <location>
        <begin position="118"/>
        <end position="124"/>
    </location>
</feature>
<feature type="helix" evidence="2">
    <location>
        <begin position="128"/>
        <end position="137"/>
    </location>
</feature>
<feature type="helix" evidence="2">
    <location>
        <begin position="138"/>
        <end position="140"/>
    </location>
</feature>
<feature type="strand" evidence="2">
    <location>
        <begin position="144"/>
        <end position="153"/>
    </location>
</feature>
<feature type="helix" evidence="2">
    <location>
        <begin position="157"/>
        <end position="165"/>
    </location>
</feature>
<feature type="helix" evidence="2">
    <location>
        <begin position="166"/>
        <end position="168"/>
    </location>
</feature>
<feature type="strand" evidence="2">
    <location>
        <begin position="171"/>
        <end position="176"/>
    </location>
</feature>
<feature type="strand" evidence="2">
    <location>
        <begin position="178"/>
        <end position="180"/>
    </location>
</feature>
<feature type="helix" evidence="2">
    <location>
        <begin position="181"/>
        <end position="184"/>
    </location>
</feature>
<feature type="strand" evidence="2">
    <location>
        <begin position="185"/>
        <end position="191"/>
    </location>
</feature>
<feature type="helix" evidence="2">
    <location>
        <begin position="192"/>
        <end position="203"/>
    </location>
</feature>
<feature type="strand" evidence="2">
    <location>
        <begin position="205"/>
        <end position="207"/>
    </location>
</feature>
<feature type="helix" evidence="2">
    <location>
        <begin position="211"/>
        <end position="213"/>
    </location>
</feature>
<protein>
    <recommendedName>
        <fullName>Uncharacterized protein AF_1403</fullName>
    </recommendedName>
</protein>
<proteinExistence type="evidence at protein level"/>
<name>Y1403_ARCFU</name>